<gene>
    <name evidence="25 28" type="primary">EGLN3</name>
</gene>
<keyword id="KW-0053">Apoptosis</keyword>
<keyword id="KW-0963">Cytoplasm</keyword>
<keyword id="KW-0223">Dioxygenase</keyword>
<keyword id="KW-0227">DNA damage</keyword>
<keyword id="KW-0408">Iron</keyword>
<keyword id="KW-0479">Metal-binding</keyword>
<keyword id="KW-0539">Nucleus</keyword>
<keyword id="KW-0560">Oxidoreductase</keyword>
<keyword id="KW-1267">Proteomics identification</keyword>
<keyword id="KW-1185">Reference proteome</keyword>
<keyword id="KW-0832">Ubl conjugation</keyword>
<keyword id="KW-0847">Vitamin C</keyword>
<proteinExistence type="evidence at protein level"/>
<accession>Q9H6Z9</accession>
<accession>Q2TA79</accession>
<accession>Q3B8N4</accession>
<accession>Q6P1R2</accession>
<sequence length="239" mass="27261">MPLGHIMRLDLEKIALEYIVPCLHEVGFCYLDNFLGEVVGDCVLERVKQLHCTGALRDGQLAGPRAGVSKRHLRGDQITWIGGNEEGCEAISFLLSLIDRLVLYCGSRLGKYYVKERSKAMVACYPGNGTGYVRHVDNPNGDGRCITCIYYLNKNWDAKLHGGILRIFPEGKSFIADVEPIFDRLLFFWSDRRNPHEVQPSYATRYAMTVWYFDAEERAEAKKKFRNLTRKTESALTED</sequence>
<comment type="function">
    <text evidence="6 9 13 14 15 16 17 19 20 21 23 27">Prolyl hydroxylase that mediates hydroxylation of proline residues in target proteins, such as PKM, TELO2, ATF4 and HIF1A (PubMed:19584355, PubMed:20978507, PubMed:21483450, PubMed:21575608, PubMed:21620138, PubMed:22797300). Target proteins are preferentially recognized via a LXXLAP motif. Cellular oxygen sensor that catalyzes, under normoxic conditions, the post-translational formation of 4-hydroxyproline in hypoxia-inducible factor (HIF) alpha proteins (PubMed:11595184, PubMed:12181324). Hydroxylates a specific proline found in each of the oxygen-dependent degradation (ODD) domains (N-terminal, NODD, and C-terminal, CODD) of HIF1A (PubMed:11595184, PubMed:12181324). Also hydroxylates HIF2A (PubMed:11595184, PubMed:12181324). Has a preference for the CODD site for both HIF1A and HIF2A (PubMed:11595184, PubMed:12181324). Hydroxylation on the NODD site by EGLN3 appears to require prior hydroxylation on the CODD site (PubMed:11595184, PubMed:12181324). Hydroxylated HIFs are then targeted for proteasomal degradation via the von Hippel-Lindau ubiquitination complex (PubMed:11595184, PubMed:12181324). Under hypoxic conditions, the hydroxylation reaction is attenuated allowing HIFs to escape degradation resulting in their translocation to the nucleus, heterodimerization with HIF1B, and increased expression of hypoxy-inducible genes (PubMed:11595184, PubMed:12181324). ELGN3 is the most important isozyme in limiting physiological activation of HIFs (particularly HIF2A) in hypoxia. Also hydroxylates PKM in hypoxia, limiting glycolysis (PubMed:21483450, PubMed:21620138). Under normoxia, hydroxylates and regulates the stability of ADRB2 (PubMed:19584355). Regulator of cardiomyocyte and neuronal apoptosis. In cardiomyocytes, inhibits the anti-apoptotic effect of BCL2 by disrupting the BAX-BCL2 complex (PubMed:20849813). In neurons, has a NGF-induced proapoptotic effect, probably through regulating CASP3 activity (PubMed:16098468). Also essential for hypoxic regulation of neutrophilic inflammation (PubMed:21317538). Plays a crucial role in DNA damage response (DDR) by hydroxylating TELO2, promoting its interaction with ATR which is required for activation of the ATR/CHK1/p53 pathway (PubMed:22797300). Also mediates hydroxylation of ATF4, leading to decreased protein stability of ATF4 (Probable).</text>
</comment>
<comment type="catalytic activity">
    <reaction evidence="7 19 21 23">
        <text>L-prolyl-[protein] + 2-oxoglutarate + O2 = trans-4-hydroxy-L-prolyl-[protein] + succinate + CO2</text>
        <dbReference type="Rhea" id="RHEA:63484"/>
        <dbReference type="Rhea" id="RHEA-COMP:12408"/>
        <dbReference type="Rhea" id="RHEA-COMP:16354"/>
        <dbReference type="ChEBI" id="CHEBI:15379"/>
        <dbReference type="ChEBI" id="CHEBI:16526"/>
        <dbReference type="ChEBI" id="CHEBI:16810"/>
        <dbReference type="ChEBI" id="CHEBI:30031"/>
        <dbReference type="ChEBI" id="CHEBI:50342"/>
        <dbReference type="ChEBI" id="CHEBI:61965"/>
    </reaction>
    <physiologicalReaction direction="left-to-right" evidence="7 19 21 23">
        <dbReference type="Rhea" id="RHEA:63485"/>
    </physiologicalReaction>
</comment>
<comment type="catalytic activity">
    <reaction evidence="7">
        <text>L-prolyl-[hypoxia-inducible factor alpha subunit] + 2-oxoglutarate + O2 = trans-4-hydroxy-L-prolyl-[hypoxia-inducible factor alpha subunit] + succinate + CO2</text>
        <dbReference type="Rhea" id="RHEA:48400"/>
        <dbReference type="Rhea" id="RHEA-COMP:12093"/>
        <dbReference type="Rhea" id="RHEA-COMP:12094"/>
        <dbReference type="ChEBI" id="CHEBI:15379"/>
        <dbReference type="ChEBI" id="CHEBI:16526"/>
        <dbReference type="ChEBI" id="CHEBI:16810"/>
        <dbReference type="ChEBI" id="CHEBI:30031"/>
        <dbReference type="ChEBI" id="CHEBI:50342"/>
        <dbReference type="ChEBI" id="CHEBI:61965"/>
        <dbReference type="EC" id="1.14.11.29"/>
    </reaction>
</comment>
<comment type="cofactor">
    <cofactor evidence="5">
        <name>Fe(2+)</name>
        <dbReference type="ChEBI" id="CHEBI:29033"/>
    </cofactor>
    <text evidence="5">Binds 1 Fe(2+) ion per subunit.</text>
</comment>
<comment type="cofactor">
    <cofactor evidence="3">
        <name>L-ascorbate</name>
        <dbReference type="ChEBI" id="CHEBI:38290"/>
    </cofactor>
</comment>
<comment type="activity regulation">
    <text evidence="6 11 18">Activated in cardiovascular cells and Hela cells following exposure to hypoxia. Inhibited by polynitrogen compounds probably by chelation to Fe(2+) ions.</text>
</comment>
<comment type="subunit">
    <text evidence="1 14 15 19 20 21 22">Interacts with BCL2 (via its BH4 domain); the interaction disrupts the BAX-BCL4 complex inhibiting the anti-apoptotic activity of BCL2 (PubMed:20849813). Interacts with WDR83; the interaction leads to almost complete elimination of HIF-mediated reporter activity (By similarity). Interacts with ADRB2; the interaction hydroxylates ADRB2 facilitating its ubiquitination by the VHL-E3 ligase complex (PubMed:19584355). Interacts with PAX2; the interaction targets PAX2 for destruction (PubMed:21575608). Interacts with PKM; the interaction hydroxylates PKM in hypoxia (PubMed:21483450, PubMed:21620138). Interacts with LIMD1, WTIP and AJUBA (PubMed:22286099).</text>
</comment>
<comment type="interaction">
    <interactant intactId="EBI-1175354">
        <id>Q9H6Z9</id>
    </interactant>
    <interactant intactId="EBI-743598">
        <id>Q9NYB9</id>
        <label>ABI2</label>
    </interactant>
    <organismsDiffer>false</organismsDiffer>
    <experiments>3</experiments>
</comment>
<comment type="interaction">
    <interactant intactId="EBI-1175354">
        <id>Q9H6Z9</id>
    </interactant>
    <interactant intactId="EBI-10171902">
        <id>P56545-3</id>
        <label>CTBP2</label>
    </interactant>
    <organismsDiffer>false</organismsDiffer>
    <experiments>3</experiments>
</comment>
<comment type="interaction">
    <interactant intactId="EBI-1175354">
        <id>Q9H6Z9</id>
    </interactant>
    <interactant intactId="EBI-1265847">
        <id>Q16829</id>
        <label>DUSP7</label>
    </interactant>
    <organismsDiffer>false</organismsDiffer>
    <experiments>3</experiments>
</comment>
<comment type="interaction">
    <interactant intactId="EBI-1175354">
        <id>Q9H6Z9</id>
    </interactant>
    <interactant intactId="EBI-2349927">
        <id>Q5JST6</id>
        <label>EFHC2</label>
    </interactant>
    <organismsDiffer>false</organismsDiffer>
    <experiments>3</experiments>
</comment>
<comment type="interaction">
    <interactant intactId="EBI-1175354">
        <id>Q9H6Z9</id>
    </interactant>
    <interactant intactId="EBI-12193763">
        <id>A1KXE4-2</id>
        <label>FAM168B</label>
    </interactant>
    <organismsDiffer>false</organismsDiffer>
    <experiments>3</experiments>
</comment>
<comment type="interaction">
    <interactant intactId="EBI-1175354">
        <id>Q9H6Z9</id>
    </interactant>
    <interactant intactId="EBI-2869608">
        <id>Q9P0K8</id>
        <label>FOXJ2</label>
    </interactant>
    <organismsDiffer>false</organismsDiffer>
    <experiments>6</experiments>
</comment>
<comment type="interaction">
    <interactant intactId="EBI-1175354">
        <id>Q9H6Z9</id>
    </interactant>
    <interactant intactId="EBI-19954058">
        <id>O15499</id>
        <label>GSC2</label>
    </interactant>
    <organismsDiffer>false</organismsDiffer>
    <experiments>3</experiments>
</comment>
<comment type="interaction">
    <interactant intactId="EBI-1175354">
        <id>Q9H6Z9</id>
    </interactant>
    <interactant intactId="EBI-10179332">
        <id>D0VY79</id>
        <label>HIF1A</label>
    </interactant>
    <organismsDiffer>false</organismsDiffer>
    <experiments>3</experiments>
</comment>
<comment type="interaction">
    <interactant intactId="EBI-1175354">
        <id>Q9H6Z9</id>
    </interactant>
    <interactant intactId="EBI-447269">
        <id>Q16665</id>
        <label>HIF1A</label>
    </interactant>
    <organismsDiffer>false</organismsDiffer>
    <experiments>6</experiments>
</comment>
<comment type="interaction">
    <interactant intactId="EBI-1175354">
        <id>Q9H6Z9</id>
    </interactant>
    <interactant intactId="EBI-713456">
        <id>Q13123</id>
        <label>IK</label>
    </interactant>
    <organismsDiffer>false</organismsDiffer>
    <experiments>3</experiments>
</comment>
<comment type="interaction">
    <interactant intactId="EBI-1175354">
        <id>Q9H6Z9</id>
    </interactant>
    <interactant intactId="EBI-747204">
        <id>Q9UKT9</id>
        <label>IKZF3</label>
    </interactant>
    <organismsDiffer>false</organismsDiffer>
    <experiments>3</experiments>
</comment>
<comment type="interaction">
    <interactant intactId="EBI-1175354">
        <id>Q9H6Z9</id>
    </interactant>
    <interactant intactId="EBI-2865580">
        <id>O43679</id>
        <label>LDB2</label>
    </interactant>
    <organismsDiffer>false</organismsDiffer>
    <experiments>3</experiments>
</comment>
<comment type="interaction">
    <interactant intactId="EBI-1175354">
        <id>Q9H6Z9</id>
    </interactant>
    <interactant intactId="EBI-739832">
        <id>Q8TBB1</id>
        <label>LNX1</label>
    </interactant>
    <organismsDiffer>false</organismsDiffer>
    <experiments>3</experiments>
</comment>
<comment type="interaction">
    <interactant intactId="EBI-1175354">
        <id>Q9H6Z9</id>
    </interactant>
    <interactant intactId="EBI-1384105">
        <id>Q16659</id>
        <label>MAPK6</label>
    </interactant>
    <organismsDiffer>false</organismsDiffer>
    <experiments>6</experiments>
</comment>
<comment type="interaction">
    <interactant intactId="EBI-1175354">
        <id>Q9H6Z9</id>
    </interactant>
    <interactant intactId="EBI-10247000">
        <id>Q6IBW4-4</id>
        <label>NCAPH2</label>
    </interactant>
    <organismsDiffer>false</organismsDiffer>
    <experiments>3</experiments>
</comment>
<comment type="interaction">
    <interactant intactId="EBI-1175354">
        <id>Q9H6Z9</id>
    </interactant>
    <interactant intactId="EBI-741158">
        <id>Q96HA8</id>
        <label>NTAQ1</label>
    </interactant>
    <organismsDiffer>false</organismsDiffer>
    <experiments>3</experiments>
</comment>
<comment type="interaction">
    <interactant intactId="EBI-1175354">
        <id>Q9H6Z9</id>
    </interactant>
    <interactant intactId="EBI-725454">
        <id>Q13438</id>
        <label>OS9</label>
    </interactant>
    <organismsDiffer>false</organismsDiffer>
    <experiments>2</experiments>
</comment>
<comment type="interaction">
    <interactant intactId="EBI-1175354">
        <id>Q9H6Z9</id>
    </interactant>
    <interactant intactId="EBI-4304679">
        <id>P14618-1</id>
        <label>PKM</label>
    </interactant>
    <organismsDiffer>false</organismsDiffer>
    <experiments>2</experiments>
</comment>
<comment type="interaction">
    <interactant intactId="EBI-1175354">
        <id>Q9H6Z9</id>
    </interactant>
    <interactant intactId="EBI-4401947">
        <id>Q9HB19</id>
        <label>PLEKHA2</label>
    </interactant>
    <organismsDiffer>false</organismsDiffer>
    <experiments>3</experiments>
</comment>
<comment type="interaction">
    <interactant intactId="EBI-1175354">
        <id>Q9H6Z9</id>
    </interactant>
    <interactant intactId="EBI-11322432">
        <id>Q8NC74</id>
        <label>RBBP8NL</label>
    </interactant>
    <organismsDiffer>false</organismsDiffer>
    <experiments>3</experiments>
</comment>
<comment type="interaction">
    <interactant intactId="EBI-1175354">
        <id>Q9H6Z9</id>
    </interactant>
    <interactant intactId="EBI-307352">
        <id>Q04864</id>
        <label>REL</label>
    </interactant>
    <organismsDiffer>false</organismsDiffer>
    <experiments>4</experiments>
</comment>
<comment type="interaction">
    <interactant intactId="EBI-1175354">
        <id>Q9H6Z9</id>
    </interactant>
    <interactant intactId="EBI-2826300">
        <id>Q53GC0</id>
        <label>SERTAD1</label>
    </interactant>
    <organismsDiffer>false</organismsDiffer>
    <experiments>3</experiments>
</comment>
<comment type="interaction">
    <interactant intactId="EBI-1175354">
        <id>Q9H6Z9</id>
    </interactant>
    <interactant intactId="EBI-10182647">
        <id>Q6PF05-3</id>
        <label>TTC23L</label>
    </interactant>
    <organismsDiffer>false</organismsDiffer>
    <experiments>3</experiments>
</comment>
<comment type="interaction">
    <interactant intactId="EBI-1175354">
        <id>Q9H6Z9</id>
    </interactant>
    <interactant intactId="EBI-5458880">
        <id>Q96GY0</id>
        <label>ZC2HC1A</label>
    </interactant>
    <organismsDiffer>false</organismsDiffer>
    <experiments>3</experiments>
</comment>
<comment type="interaction">
    <interactant intactId="EBI-1175354">
        <id>Q9H6Z9</id>
    </interactant>
    <interactant intactId="EBI-625509">
        <id>Q8N720</id>
        <label>ZNF655</label>
    </interactant>
    <organismsDiffer>false</organismsDiffer>
    <experiments>3</experiments>
</comment>
<comment type="subcellular location">
    <subcellularLocation>
        <location evidence="8 10">Nucleus</location>
    </subcellularLocation>
    <subcellularLocation>
        <location evidence="10">Cytoplasm</location>
    </subcellularLocation>
    <text evidence="1">Colocalizes with WDR83 in the cytoplasm.</text>
</comment>
<comment type="tissue specificity">
    <text evidence="8 11 20">Widely expressed at low levels. Expressed at higher levels in adult heart (cardiac myocytes, aortic endothelial cells and coronary artery smooth muscle), lung and placenta, and in fetal spleen, heart and skeletal muscle. Also expressed in pancreas. Localized to pancreatic acini and islet cells.</text>
</comment>
<comment type="induction">
    <text evidence="10 12 16 17">Induced by hypoxia in a number of cells including neutrophils and certain cancer cell lines. Up-regulated 10-fold in pancreatic cancers.</text>
</comment>
<comment type="domain">
    <text evidence="4">The Beta(2)beta(3) 'finger-like' loop domain is important for substrate (HIFs' CODD/NODD) selectivity.</text>
</comment>
<comment type="PTM">
    <text evidence="2">Ubiquitinated by SIAH1 and/or SIAH2 in response to the unfolded protein response (UPR), leading to its degradation.</text>
</comment>
<dbReference type="EC" id="1.14.11.-" evidence="7 19 21 23"/>
<dbReference type="EC" id="1.14.11.29" evidence="7"/>
<dbReference type="EMBL" id="AJ310545">
    <property type="protein sequence ID" value="CAC42511.1"/>
    <property type="molecule type" value="mRNA"/>
</dbReference>
<dbReference type="EMBL" id="AK025273">
    <property type="protein sequence ID" value="BAB15101.1"/>
    <property type="molecule type" value="mRNA"/>
</dbReference>
<dbReference type="EMBL" id="BC010992">
    <property type="protein sequence ID" value="AAH10992.3"/>
    <property type="molecule type" value="mRNA"/>
</dbReference>
<dbReference type="EMBL" id="BC064924">
    <property type="protein sequence ID" value="AAH64924.2"/>
    <property type="molecule type" value="mRNA"/>
</dbReference>
<dbReference type="EMBL" id="BC105939">
    <property type="protein sequence ID" value="AAI05940.1"/>
    <property type="molecule type" value="mRNA"/>
</dbReference>
<dbReference type="EMBL" id="BC111057">
    <property type="protein sequence ID" value="AAI11058.2"/>
    <property type="molecule type" value="mRNA"/>
</dbReference>
<dbReference type="CCDS" id="CCDS9646.1"/>
<dbReference type="RefSeq" id="NP_001295032.1">
    <property type="nucleotide sequence ID" value="NM_001308103.1"/>
</dbReference>
<dbReference type="RefSeq" id="NP_071356.1">
    <property type="nucleotide sequence ID" value="NM_022073.4"/>
</dbReference>
<dbReference type="SMR" id="Q9H6Z9"/>
<dbReference type="BioGRID" id="125185">
    <property type="interactions" value="1294"/>
</dbReference>
<dbReference type="CORUM" id="Q9H6Z9"/>
<dbReference type="FunCoup" id="Q9H6Z9">
    <property type="interactions" value="2653"/>
</dbReference>
<dbReference type="IntAct" id="Q9H6Z9">
    <property type="interactions" value="240"/>
</dbReference>
<dbReference type="MINT" id="Q9H6Z9"/>
<dbReference type="STRING" id="9606.ENSP00000250457"/>
<dbReference type="BindingDB" id="Q9H6Z9"/>
<dbReference type="ChEMBL" id="CHEMBL5705"/>
<dbReference type="DrugBank" id="DB00126">
    <property type="generic name" value="Ascorbic acid"/>
</dbReference>
<dbReference type="DrugBank" id="DB11682">
    <property type="generic name" value="Daprodustat"/>
</dbReference>
<dbReference type="DrugBank" id="DB04847">
    <property type="generic name" value="Roxadustat"/>
</dbReference>
<dbReference type="DrugBank" id="DB12255">
    <property type="generic name" value="Vadadustat"/>
</dbReference>
<dbReference type="DrugCentral" id="Q9H6Z9"/>
<dbReference type="GuidetoPHARMACOLOGY" id="2834"/>
<dbReference type="iPTMnet" id="Q9H6Z9"/>
<dbReference type="PhosphoSitePlus" id="Q9H6Z9"/>
<dbReference type="BioMuta" id="EGLN3"/>
<dbReference type="DMDM" id="32129515"/>
<dbReference type="jPOST" id="Q9H6Z9"/>
<dbReference type="MassIVE" id="Q9H6Z9"/>
<dbReference type="PaxDb" id="9606-ENSP00000250457"/>
<dbReference type="PeptideAtlas" id="Q9H6Z9"/>
<dbReference type="ProteomicsDB" id="81067"/>
<dbReference type="Antibodypedia" id="23133">
    <property type="antibodies" value="472 antibodies from 34 providers"/>
</dbReference>
<dbReference type="DNASU" id="112399"/>
<dbReference type="Ensembl" id="ENST00000250457.9">
    <property type="protein sequence ID" value="ENSP00000250457.4"/>
    <property type="gene ID" value="ENSG00000129521.15"/>
</dbReference>
<dbReference type="GeneID" id="112399"/>
<dbReference type="KEGG" id="hsa:112399"/>
<dbReference type="MANE-Select" id="ENST00000250457.9">
    <property type="protein sequence ID" value="ENSP00000250457.4"/>
    <property type="RefSeq nucleotide sequence ID" value="NM_022073.4"/>
    <property type="RefSeq protein sequence ID" value="NP_071356.1"/>
</dbReference>
<dbReference type="UCSC" id="uc001wsa.5">
    <property type="organism name" value="human"/>
</dbReference>
<dbReference type="AGR" id="HGNC:14661"/>
<dbReference type="CTD" id="112399"/>
<dbReference type="DisGeNET" id="112399"/>
<dbReference type="GeneCards" id="EGLN3"/>
<dbReference type="HGNC" id="HGNC:14661">
    <property type="gene designation" value="EGLN3"/>
</dbReference>
<dbReference type="HPA" id="ENSG00000129521">
    <property type="expression patterns" value="Tissue enhanced (heart muscle, skin)"/>
</dbReference>
<dbReference type="MalaCards" id="EGLN3"/>
<dbReference type="MIM" id="606426">
    <property type="type" value="gene"/>
</dbReference>
<dbReference type="neXtProt" id="NX_Q9H6Z9"/>
<dbReference type="OpenTargets" id="ENSG00000129521"/>
<dbReference type="PharmGKB" id="PA27672"/>
<dbReference type="VEuPathDB" id="HostDB:ENSG00000129521"/>
<dbReference type="eggNOG" id="KOG3710">
    <property type="taxonomic scope" value="Eukaryota"/>
</dbReference>
<dbReference type="GeneTree" id="ENSGT00940000158745"/>
<dbReference type="HOGENOM" id="CLU_022206_0_1_1"/>
<dbReference type="InParanoid" id="Q9H6Z9"/>
<dbReference type="OMA" id="VKEMHYS"/>
<dbReference type="OrthoDB" id="76265at2759"/>
<dbReference type="PAN-GO" id="Q9H6Z9">
    <property type="GO annotations" value="6 GO annotations based on evolutionary models"/>
</dbReference>
<dbReference type="PhylomeDB" id="Q9H6Z9"/>
<dbReference type="TreeFam" id="TF314595"/>
<dbReference type="BRENDA" id="1.14.11.2">
    <property type="organism ID" value="2681"/>
</dbReference>
<dbReference type="BRENDA" id="1.14.11.29">
    <property type="organism ID" value="2681"/>
</dbReference>
<dbReference type="PathwayCommons" id="Q9H6Z9"/>
<dbReference type="Reactome" id="R-HSA-1234176">
    <property type="pathway name" value="Oxygen-dependent proline hydroxylation of Hypoxia-inducible Factor Alpha"/>
</dbReference>
<dbReference type="SignaLink" id="Q9H6Z9"/>
<dbReference type="SIGNOR" id="Q9H6Z9"/>
<dbReference type="BioGRID-ORCS" id="112399">
    <property type="hits" value="14 hits in 1164 CRISPR screens"/>
</dbReference>
<dbReference type="ChiTaRS" id="EGLN3">
    <property type="organism name" value="human"/>
</dbReference>
<dbReference type="GeneWiki" id="EGLN3"/>
<dbReference type="GenomeRNAi" id="112399"/>
<dbReference type="Pharos" id="Q9H6Z9">
    <property type="development level" value="Tclin"/>
</dbReference>
<dbReference type="PRO" id="PR:Q9H6Z9"/>
<dbReference type="Proteomes" id="UP000005640">
    <property type="component" value="Chromosome 14"/>
</dbReference>
<dbReference type="RNAct" id="Q9H6Z9">
    <property type="molecule type" value="protein"/>
</dbReference>
<dbReference type="Bgee" id="ENSG00000129521">
    <property type="expression patterns" value="Expressed in skin of leg and 169 other cell types or tissues"/>
</dbReference>
<dbReference type="ExpressionAtlas" id="Q9H6Z9">
    <property type="expression patterns" value="baseline and differential"/>
</dbReference>
<dbReference type="GO" id="GO:0005737">
    <property type="term" value="C:cytoplasm"/>
    <property type="evidence" value="ECO:0000314"/>
    <property type="project" value="UniProtKB"/>
</dbReference>
<dbReference type="GO" id="GO:0005829">
    <property type="term" value="C:cytosol"/>
    <property type="evidence" value="ECO:0000314"/>
    <property type="project" value="HPA"/>
</dbReference>
<dbReference type="GO" id="GO:0005654">
    <property type="term" value="C:nucleoplasm"/>
    <property type="evidence" value="ECO:0000304"/>
    <property type="project" value="Reactome"/>
</dbReference>
<dbReference type="GO" id="GO:0005634">
    <property type="term" value="C:nucleus"/>
    <property type="evidence" value="ECO:0000314"/>
    <property type="project" value="UniProtKB"/>
</dbReference>
<dbReference type="GO" id="GO:0016706">
    <property type="term" value="F:2-oxoglutarate-dependent dioxygenase activity"/>
    <property type="evidence" value="ECO:0000314"/>
    <property type="project" value="MGI"/>
</dbReference>
<dbReference type="GO" id="GO:0008198">
    <property type="term" value="F:ferrous iron binding"/>
    <property type="evidence" value="ECO:0000318"/>
    <property type="project" value="GO_Central"/>
</dbReference>
<dbReference type="GO" id="GO:0160082">
    <property type="term" value="F:hypoxia-inducible factor-proline dioxygenase activity"/>
    <property type="evidence" value="ECO:0007669"/>
    <property type="project" value="UniProtKB-EC"/>
</dbReference>
<dbReference type="GO" id="GO:0031418">
    <property type="term" value="F:L-ascorbic acid binding"/>
    <property type="evidence" value="ECO:0007669"/>
    <property type="project" value="UniProtKB-KW"/>
</dbReference>
<dbReference type="GO" id="GO:0031545">
    <property type="term" value="F:peptidyl-proline 4-dioxygenase activity"/>
    <property type="evidence" value="ECO:0000314"/>
    <property type="project" value="FlyBase"/>
</dbReference>
<dbReference type="GO" id="GO:0006915">
    <property type="term" value="P:apoptotic process"/>
    <property type="evidence" value="ECO:0007669"/>
    <property type="project" value="UniProtKB-KW"/>
</dbReference>
<dbReference type="GO" id="GO:0071456">
    <property type="term" value="P:cellular response to hypoxia"/>
    <property type="evidence" value="ECO:0000318"/>
    <property type="project" value="GO_Central"/>
</dbReference>
<dbReference type="GO" id="GO:0006974">
    <property type="term" value="P:DNA damage response"/>
    <property type="evidence" value="ECO:0007669"/>
    <property type="project" value="UniProtKB-KW"/>
</dbReference>
<dbReference type="GO" id="GO:0018126">
    <property type="term" value="P:protein hydroxylation"/>
    <property type="evidence" value="ECO:0000314"/>
    <property type="project" value="UniProtKB"/>
</dbReference>
<dbReference type="GO" id="GO:0043523">
    <property type="term" value="P:regulation of neuron apoptotic process"/>
    <property type="evidence" value="ECO:0000250"/>
    <property type="project" value="UniProtKB"/>
</dbReference>
<dbReference type="FunFam" id="2.60.120.620:FF:000005">
    <property type="entry name" value="Egl nine homolog 1"/>
    <property type="match status" value="1"/>
</dbReference>
<dbReference type="Gene3D" id="2.60.120.620">
    <property type="entry name" value="q2cbj1_9rhob like domain"/>
    <property type="match status" value="1"/>
</dbReference>
<dbReference type="InterPro" id="IPR051559">
    <property type="entry name" value="HIF_prolyl_hydroxylases"/>
</dbReference>
<dbReference type="InterPro" id="IPR005123">
    <property type="entry name" value="Oxoglu/Fe-dep_dioxygenase_dom"/>
</dbReference>
<dbReference type="InterPro" id="IPR006620">
    <property type="entry name" value="Pro_4_hyd_alph"/>
</dbReference>
<dbReference type="InterPro" id="IPR044862">
    <property type="entry name" value="Pro_4_hyd_alph_FE2OG_OXY"/>
</dbReference>
<dbReference type="PANTHER" id="PTHR12907">
    <property type="entry name" value="EGL NINE HOMOLOG-RELATED"/>
    <property type="match status" value="1"/>
</dbReference>
<dbReference type="PANTHER" id="PTHR12907:SF28">
    <property type="entry name" value="PROLYL HYDROXYLASE EGLN3"/>
    <property type="match status" value="1"/>
</dbReference>
<dbReference type="Pfam" id="PF13640">
    <property type="entry name" value="2OG-FeII_Oxy_3"/>
    <property type="match status" value="1"/>
</dbReference>
<dbReference type="SMART" id="SM00702">
    <property type="entry name" value="P4Hc"/>
    <property type="match status" value="1"/>
</dbReference>
<dbReference type="PROSITE" id="PS51471">
    <property type="entry name" value="FE2OG_OXY"/>
    <property type="match status" value="1"/>
</dbReference>
<evidence type="ECO:0000250" key="1">
    <source>
        <dbReference type="UniProtKB" id="Q62630"/>
    </source>
</evidence>
<evidence type="ECO:0000250" key="2">
    <source>
        <dbReference type="UniProtKB" id="Q91UZ4"/>
    </source>
</evidence>
<evidence type="ECO:0000250" key="3">
    <source>
        <dbReference type="UniProtKB" id="Q96KS0"/>
    </source>
</evidence>
<evidence type="ECO:0000250" key="4">
    <source>
        <dbReference type="UniProtKB" id="Q9GZT9"/>
    </source>
</evidence>
<evidence type="ECO:0000255" key="5">
    <source>
        <dbReference type="PROSITE-ProRule" id="PRU00805"/>
    </source>
</evidence>
<evidence type="ECO:0000269" key="6">
    <source>
    </source>
</evidence>
<evidence type="ECO:0000269" key="7">
    <source>
    </source>
</evidence>
<evidence type="ECO:0000269" key="8">
    <source>
    </source>
</evidence>
<evidence type="ECO:0000269" key="9">
    <source>
    </source>
</evidence>
<evidence type="ECO:0000269" key="10">
    <source>
    </source>
</evidence>
<evidence type="ECO:0000269" key="11">
    <source>
    </source>
</evidence>
<evidence type="ECO:0000269" key="12">
    <source>
    </source>
</evidence>
<evidence type="ECO:0000269" key="13">
    <source>
    </source>
</evidence>
<evidence type="ECO:0000269" key="14">
    <source>
    </source>
</evidence>
<evidence type="ECO:0000269" key="15">
    <source>
    </source>
</evidence>
<evidence type="ECO:0000269" key="16">
    <source>
    </source>
</evidence>
<evidence type="ECO:0000269" key="17">
    <source>
    </source>
</evidence>
<evidence type="ECO:0000269" key="18">
    <source>
    </source>
</evidence>
<evidence type="ECO:0000269" key="19">
    <source>
    </source>
</evidence>
<evidence type="ECO:0000269" key="20">
    <source>
    </source>
</evidence>
<evidence type="ECO:0000269" key="21">
    <source>
    </source>
</evidence>
<evidence type="ECO:0000269" key="22">
    <source>
    </source>
</evidence>
<evidence type="ECO:0000269" key="23">
    <source>
    </source>
</evidence>
<evidence type="ECO:0000303" key="24">
    <source>
    </source>
</evidence>
<evidence type="ECO:0000303" key="25">
    <source>
    </source>
</evidence>
<evidence type="ECO:0000305" key="26"/>
<evidence type="ECO:0000305" key="27">
    <source>
    </source>
</evidence>
<evidence type="ECO:0000312" key="28">
    <source>
        <dbReference type="HGNC" id="HGNC:14661"/>
    </source>
</evidence>
<name>EGLN3_HUMAN</name>
<reference key="1">
    <citation type="journal article" date="2001" name="Gene">
        <title>Characterization and comparative analysis of the EGLN gene family.</title>
        <authorList>
            <person name="Taylor M.S."/>
        </authorList>
    </citation>
    <scope>NUCLEOTIDE SEQUENCE [MRNA]</scope>
</reference>
<reference key="2">
    <citation type="journal article" date="2003" name="J. Biol. Chem.">
        <title>Characterization of the human prolyl 4-hydroxylases that modify the hypoxia-inducible factor.</title>
        <authorList>
            <person name="Hirsila M."/>
            <person name="Koivunen P."/>
            <person name="Gunzler V."/>
            <person name="Kivirikko K.I."/>
            <person name="Myllyharju J."/>
        </authorList>
    </citation>
    <scope>NUCLEOTIDE SEQUENCE [MRNA]</scope>
    <scope>SUBSTRATE SPECIFICITY</scope>
    <source>
        <tissue>Aorta</tissue>
        <tissue>Colon</tissue>
        <tissue>Lung</tissue>
    </source>
</reference>
<reference key="3">
    <citation type="journal article" date="2004" name="Nat. Genet.">
        <title>Complete sequencing and characterization of 21,243 full-length human cDNAs.</title>
        <authorList>
            <person name="Ota T."/>
            <person name="Suzuki Y."/>
            <person name="Nishikawa T."/>
            <person name="Otsuki T."/>
            <person name="Sugiyama T."/>
            <person name="Irie R."/>
            <person name="Wakamatsu A."/>
            <person name="Hayashi K."/>
            <person name="Sato H."/>
            <person name="Nagai K."/>
            <person name="Kimura K."/>
            <person name="Makita H."/>
            <person name="Sekine M."/>
            <person name="Obayashi M."/>
            <person name="Nishi T."/>
            <person name="Shibahara T."/>
            <person name="Tanaka T."/>
            <person name="Ishii S."/>
            <person name="Yamamoto J."/>
            <person name="Saito K."/>
            <person name="Kawai Y."/>
            <person name="Isono Y."/>
            <person name="Nakamura Y."/>
            <person name="Nagahari K."/>
            <person name="Murakami K."/>
            <person name="Yasuda T."/>
            <person name="Iwayanagi T."/>
            <person name="Wagatsuma M."/>
            <person name="Shiratori A."/>
            <person name="Sudo H."/>
            <person name="Hosoiri T."/>
            <person name="Kaku Y."/>
            <person name="Kodaira H."/>
            <person name="Kondo H."/>
            <person name="Sugawara M."/>
            <person name="Takahashi M."/>
            <person name="Kanda K."/>
            <person name="Yokoi T."/>
            <person name="Furuya T."/>
            <person name="Kikkawa E."/>
            <person name="Omura Y."/>
            <person name="Abe K."/>
            <person name="Kamihara K."/>
            <person name="Katsuta N."/>
            <person name="Sato K."/>
            <person name="Tanikawa M."/>
            <person name="Yamazaki M."/>
            <person name="Ninomiya K."/>
            <person name="Ishibashi T."/>
            <person name="Yamashita H."/>
            <person name="Murakawa K."/>
            <person name="Fujimori K."/>
            <person name="Tanai H."/>
            <person name="Kimata M."/>
            <person name="Watanabe M."/>
            <person name="Hiraoka S."/>
            <person name="Chiba Y."/>
            <person name="Ishida S."/>
            <person name="Ono Y."/>
            <person name="Takiguchi S."/>
            <person name="Watanabe S."/>
            <person name="Yosida M."/>
            <person name="Hotuta T."/>
            <person name="Kusano J."/>
            <person name="Kanehori K."/>
            <person name="Takahashi-Fujii A."/>
            <person name="Hara H."/>
            <person name="Tanase T.-O."/>
            <person name="Nomura Y."/>
            <person name="Togiya S."/>
            <person name="Komai F."/>
            <person name="Hara R."/>
            <person name="Takeuchi K."/>
            <person name="Arita M."/>
            <person name="Imose N."/>
            <person name="Musashino K."/>
            <person name="Yuuki H."/>
            <person name="Oshima A."/>
            <person name="Sasaki N."/>
            <person name="Aotsuka S."/>
            <person name="Yoshikawa Y."/>
            <person name="Matsunawa H."/>
            <person name="Ichihara T."/>
            <person name="Shiohata N."/>
            <person name="Sano S."/>
            <person name="Moriya S."/>
            <person name="Momiyama H."/>
            <person name="Satoh N."/>
            <person name="Takami S."/>
            <person name="Terashima Y."/>
            <person name="Suzuki O."/>
            <person name="Nakagawa S."/>
            <person name="Senoh A."/>
            <person name="Mizoguchi H."/>
            <person name="Goto Y."/>
            <person name="Shimizu F."/>
            <person name="Wakebe H."/>
            <person name="Hishigaki H."/>
            <person name="Watanabe T."/>
            <person name="Sugiyama A."/>
            <person name="Takemoto M."/>
            <person name="Kawakami B."/>
            <person name="Yamazaki M."/>
            <person name="Watanabe K."/>
            <person name="Kumagai A."/>
            <person name="Itakura S."/>
            <person name="Fukuzumi Y."/>
            <person name="Fujimori Y."/>
            <person name="Komiyama M."/>
            <person name="Tashiro H."/>
            <person name="Tanigami A."/>
            <person name="Fujiwara T."/>
            <person name="Ono T."/>
            <person name="Yamada K."/>
            <person name="Fujii Y."/>
            <person name="Ozaki K."/>
            <person name="Hirao M."/>
            <person name="Ohmori Y."/>
            <person name="Kawabata A."/>
            <person name="Hikiji T."/>
            <person name="Kobatake N."/>
            <person name="Inagaki H."/>
            <person name="Ikema Y."/>
            <person name="Okamoto S."/>
            <person name="Okitani R."/>
            <person name="Kawakami T."/>
            <person name="Noguchi S."/>
            <person name="Itoh T."/>
            <person name="Shigeta K."/>
            <person name="Senba T."/>
            <person name="Matsumura K."/>
            <person name="Nakajima Y."/>
            <person name="Mizuno T."/>
            <person name="Morinaga M."/>
            <person name="Sasaki M."/>
            <person name="Togashi T."/>
            <person name="Oyama M."/>
            <person name="Hata H."/>
            <person name="Watanabe M."/>
            <person name="Komatsu T."/>
            <person name="Mizushima-Sugano J."/>
            <person name="Satoh T."/>
            <person name="Shirai Y."/>
            <person name="Takahashi Y."/>
            <person name="Nakagawa K."/>
            <person name="Okumura K."/>
            <person name="Nagase T."/>
            <person name="Nomura N."/>
            <person name="Kikuchi H."/>
            <person name="Masuho Y."/>
            <person name="Yamashita R."/>
            <person name="Nakai K."/>
            <person name="Yada T."/>
            <person name="Nakamura Y."/>
            <person name="Ohara O."/>
            <person name="Isogai T."/>
            <person name="Sugano S."/>
        </authorList>
    </citation>
    <scope>NUCLEOTIDE SEQUENCE [LARGE SCALE MRNA]</scope>
    <source>
        <tissue>Colon</tissue>
    </source>
</reference>
<reference key="4">
    <citation type="journal article" date="2004" name="Genome Res.">
        <title>The status, quality, and expansion of the NIH full-length cDNA project: the Mammalian Gene Collection (MGC).</title>
        <authorList>
            <consortium name="The MGC Project Team"/>
        </authorList>
    </citation>
    <scope>NUCLEOTIDE SEQUENCE [LARGE SCALE MRNA]</scope>
    <source>
        <tissue>Ovary</tissue>
        <tissue>Retinoblastoma</tissue>
    </source>
</reference>
<reference key="5">
    <citation type="journal article" date="2001" name="Cell">
        <title>C. elegans EGL-9 and mammalian homologs define a family of dioxygenases that regulate HIF by prolyl hydroxylation.</title>
        <authorList>
            <person name="Epstein A.C.R."/>
            <person name="Gleadle J.M."/>
            <person name="McNeill L.A."/>
            <person name="Hewitson K.S."/>
            <person name="O'Rourke J."/>
            <person name="Mole D.R."/>
            <person name="Mukherji M."/>
            <person name="Metzen E."/>
            <person name="Wilson M.I."/>
            <person name="Dhanda A."/>
            <person name="Tian Y.M."/>
            <person name="Masson N."/>
            <person name="Hamilton D.L."/>
            <person name="Jaakkola P."/>
            <person name="Barstead R."/>
            <person name="Hodgkin J."/>
            <person name="Maxwell P.H."/>
            <person name="Pugh C.W."/>
            <person name="Schofield C.J."/>
            <person name="Ratcliffe P.J."/>
        </authorList>
    </citation>
    <scope>FUNCTION</scope>
    <scope>ACTIVITY REGULATION</scope>
</reference>
<reference key="6">
    <citation type="journal article" date="2001" name="Cell">
        <title>HIF-1, O(2), and the 3 PHDs: how animal cells signal hypoxia to the nucleus.</title>
        <authorList>
            <person name="Semenza G.L."/>
        </authorList>
    </citation>
    <scope>REVIEW</scope>
</reference>
<reference key="7">
    <citation type="journal article" date="2001" name="Science">
        <title>A conserved family of prolyl-4-hydroxylases that modify HIF.</title>
        <authorList>
            <person name="Bruick R.K."/>
            <person name="McKnight S.L."/>
        </authorList>
    </citation>
    <scope>CATALYTIC ACTIVITY</scope>
    <scope>MUTAGENESIS OF HIS-135; ASP-137 AND HIS-196</scope>
</reference>
<reference key="8">
    <citation type="journal article" date="2002" name="Biochem. Biophys. Res. Commun.">
        <title>Overexpression of PH-4, a novel putative proline 4-hydroxylase, modulates activity of hypoxia-inducible transcription factors.</title>
        <authorList>
            <person name="Oehme F."/>
            <person name="Ellinghaus P."/>
            <person name="Kolkhof P."/>
            <person name="Smith T.J."/>
            <person name="Ramakrishnan S."/>
            <person name="Huetter J."/>
            <person name="Schramm M."/>
            <person name="Flamme I."/>
        </authorList>
    </citation>
    <scope>SUBCELLULAR LOCATION</scope>
    <scope>TISSUE SPECIFICITY</scope>
</reference>
<reference key="9">
    <citation type="journal article" date="2002" name="J. Biol. Chem.">
        <title>Sequence determinants in hypoxia-inducible factor-1alpha for hydroxylation by the prolyl hydroxylases PHD1, PHD2, and PHD3.</title>
        <authorList>
            <person name="Huang J."/>
            <person name="Zhao Q."/>
            <person name="Mooney S.M."/>
            <person name="Lee F.S."/>
        </authorList>
    </citation>
    <scope>FUNCTION</scope>
    <scope>SUBSTRATE RECOGNITION MOTIF</scope>
</reference>
<reference key="10">
    <citation type="journal article" date="2003" name="Biochem. Biophys. Res. Commun.">
        <title>Differential regulation of HIF-1alpha prolyl-4-hydroxylase genes by hypoxia in human cardiovascular cells.</title>
        <authorList>
            <person name="Cioffi C.L."/>
            <person name="Qin Liu X."/>
            <person name="Kosinski P.A."/>
            <person name="Garay M."/>
            <person name="Bowen B.R."/>
        </authorList>
    </citation>
    <scope>TISSUE SPECIFICITY</scope>
    <scope>ACTIVITY REGULATION</scope>
</reference>
<reference key="11">
    <citation type="journal article" date="2003" name="J. Cell Sci.">
        <title>Intracellular localisation of human HIF-1 alpha hydroxylases: implications for oxygen sensing.</title>
        <authorList>
            <person name="Metzen E."/>
            <person name="Berchner-Pfannschmidt U."/>
            <person name="Stengel P."/>
            <person name="Marxsen J.H."/>
            <person name="Stolze I."/>
            <person name="Klinger M."/>
            <person name="Huang W.Q."/>
            <person name="Wotzlaw C."/>
            <person name="Hellwig-Burgel T."/>
            <person name="Jelkmann W."/>
            <person name="Acker H."/>
            <person name="Fandrey J."/>
        </authorList>
    </citation>
    <scope>SUBCELLULAR LOCATION</scope>
    <scope>INDUCTION</scope>
</reference>
<reference key="12">
    <citation type="journal article" date="2004" name="J. Biol. Chem.">
        <title>Differential function of the prolyl hydroxylases PHD1, PHD2, and PHD3 in the regulation of hypoxia-inducible factor.</title>
        <authorList>
            <person name="Appelhoff R.J."/>
            <person name="Tian Y.M."/>
            <person name="Raval R.R."/>
            <person name="Turley H."/>
            <person name="Harris A.L."/>
            <person name="Pugh C.W."/>
            <person name="Ratcliffe P.J."/>
            <person name="Gleadle J.M."/>
        </authorList>
    </citation>
    <scope>INDUCTION</scope>
    <scope>SUBSTRATE SPECIFICITY</scope>
</reference>
<reference key="13">
    <citation type="journal article" date="2005" name="Cancer Cell">
        <title>Neuronal apoptosis linked to EglN3 prolyl hydroxylase and familial pheochromocytoma genes: developmental culling and cancer.</title>
        <authorList>
            <person name="Lee S."/>
            <person name="Nakamura E."/>
            <person name="Yang H."/>
            <person name="Wei W."/>
            <person name="Linggi M.S."/>
            <person name="Sajan M.P."/>
            <person name="Farese R.V."/>
            <person name="Freeman R.S."/>
            <person name="Carter B.D."/>
            <person name="Kaelin W.G. Jr."/>
            <person name="Schlisio S."/>
        </authorList>
    </citation>
    <scope>FUNCTION</scope>
</reference>
<reference key="14">
    <citation type="journal article" date="2007" name="Blood">
        <title>Oxygen-dependent ATF-4 stability is mediated by the PHD3 oxygen sensor.</title>
        <authorList>
            <person name="Koeditz J."/>
            <person name="Nesper J."/>
            <person name="Wottawa M."/>
            <person name="Stiehl D.P."/>
            <person name="Camenisch G."/>
            <person name="Franke C."/>
            <person name="Myllyharju J."/>
            <person name="Wenger R.H."/>
            <person name="Katschinski D.M."/>
        </authorList>
    </citation>
    <scope>FUNCTION</scope>
</reference>
<reference key="15">
    <citation type="journal article" date="2009" name="Sci. Signal.">
        <title>Oxygen-regulated beta(2)-adrenergic receptor hydroxylation by EGLN3 and ubiquitylation by pVHL.</title>
        <authorList>
            <person name="Xie L."/>
            <person name="Xiao K."/>
            <person name="Whalen E.J."/>
            <person name="Forrester M.T."/>
            <person name="Freeman R.S."/>
            <person name="Fong G."/>
            <person name="Gygi S.P."/>
            <person name="Lefkowitz R.J."/>
            <person name="Stamler J.S."/>
        </authorList>
    </citation>
    <scope>INTERACTION WITH ADRB2</scope>
    <scope>FUNCTION</scope>
    <scope>MUTAGENESIS OF 91-ILE--VAL-102</scope>
</reference>
<reference key="16">
    <citation type="journal article" date="2010" name="Biochem. Biophys. Res. Commun.">
        <title>Prolyl hydroxylase 3 interacts with Bcl-2 to regulate doxorubicin-induced apoptosis in H9c2 cells.</title>
        <authorList>
            <person name="Liu Y."/>
            <person name="Huo Z."/>
            <person name="Yan B."/>
            <person name="Lin X."/>
            <person name="Zhou Z.N."/>
            <person name="Liang X."/>
            <person name="Zhu W."/>
            <person name="Liang D."/>
            <person name="Li L."/>
            <person name="Liu Y."/>
            <person name="Zhao H."/>
            <person name="Sun Y."/>
            <person name="Chen Y.H."/>
        </authorList>
    </citation>
    <scope>INTERACTION WITH BCL2</scope>
    <scope>FUNCTION</scope>
</reference>
<reference key="17">
    <citation type="journal article" date="2010" name="Br. J. Cancer">
        <title>PHD3 regulates differentiation, tumour growth and angiogenesis in pancreatic cancer.</title>
        <authorList>
            <person name="Su Y."/>
            <person name="Loos M."/>
            <person name="Giese N."/>
            <person name="Hines O.J."/>
            <person name="Diebold I."/>
            <person name="Gorlach A."/>
            <person name="Metzen E."/>
            <person name="Pastorekova S."/>
            <person name="Friess H."/>
            <person name="Buchler P."/>
        </authorList>
    </citation>
    <scope>FUNCTION</scope>
    <scope>INDUCTION</scope>
</reference>
<reference key="18">
    <citation type="journal article" date="2011" name="Biochem. Biophys. Res. Commun.">
        <title>Prolyl hydroxylase domain protein 3 targets Pax2 for destruction.</title>
        <authorList>
            <person name="Yan B."/>
            <person name="Jiao S."/>
            <person name="Zhang H.S."/>
            <person name="Lv D.D."/>
            <person name="Xue J."/>
            <person name="Fan L."/>
            <person name="Wu G.H."/>
            <person name="Fang J."/>
        </authorList>
    </citation>
    <scope>INTERACTION WITH PAX2</scope>
    <scope>TISSUE SPECIFICITY</scope>
    <scope>FUNCTION</scope>
</reference>
<reference key="19">
    <citation type="journal article" date="2011" name="Biochem. J.">
        <title>Biochemical characterization of human HIF hydroxylases using HIF protein substrates that contain all three hydroxylation sites.</title>
        <authorList>
            <person name="Pappalardi M.B."/>
            <person name="McNulty D.E."/>
            <person name="Martin J.D."/>
            <person name="Fisher K.E."/>
            <person name="Jiang Y."/>
            <person name="Burns M.C."/>
            <person name="Zhao H."/>
            <person name="Ho T."/>
            <person name="Sweitzer S."/>
            <person name="Schwartz B."/>
            <person name="Annan R.S."/>
            <person name="Copeland R.A."/>
            <person name="Tummino P.J."/>
            <person name="Luo L."/>
        </authorList>
    </citation>
    <scope>SUBSTRATE SPECIFICITY</scope>
    <scope>IDENTIFICATION BY MASS SPECTROMETRY</scope>
</reference>
<reference key="20">
    <citation type="journal article" date="2011" name="Cell">
        <title>Pyruvate kinase M2 is a PHD3-stimulated coactivator for hypoxia-inducible factor 1.</title>
        <authorList>
            <person name="Luo W."/>
            <person name="Hu H."/>
            <person name="Chang R."/>
            <person name="Zhong J."/>
            <person name="Knabel M."/>
            <person name="O'Meally R."/>
            <person name="Cole R.N."/>
            <person name="Pandey A."/>
            <person name="Semenza G.L."/>
        </authorList>
    </citation>
    <scope>INTERACTION WITH PKM</scope>
    <scope>CATALYTIC ACTIVITY</scope>
    <scope>FUNCTION</scope>
</reference>
<reference key="21">
    <citation type="journal article" date="2011" name="Cell Res.">
        <title>The oxygen sensor PHD3 limits glycolysis under hypoxia via direct binding to pyruvate kinase.</title>
        <authorList>
            <person name="Chen N."/>
            <person name="Rinner O."/>
            <person name="Czernik D."/>
            <person name="Nytko K.J."/>
            <person name="Zheng D."/>
            <person name="Stiehl D.P."/>
            <person name="Zamboni N."/>
            <person name="Gstaiger M."/>
            <person name="Frei C."/>
        </authorList>
    </citation>
    <scope>INTERACTION WITH PKM</scope>
    <scope>CATALYTIC ACTIVITY</scope>
    <scope>FUNCTION</scope>
</reference>
<reference key="22">
    <citation type="journal article" date="2011" name="J. Clin. Invest.">
        <title>Prolyl hydroxylase 3 (PHD3) is essential for hypoxic regulation of neutrophilic inflammation in humans and mice.</title>
        <authorList>
            <person name="Walmsley S.R."/>
            <person name="Chilvers E.R."/>
            <person name="Thompson A.A."/>
            <person name="Vaughan K."/>
            <person name="Marriott H.M."/>
            <person name="Parker L.C."/>
            <person name="Shaw G."/>
            <person name="Parmar S."/>
            <person name="Schneider M."/>
            <person name="Sabroe I."/>
            <person name="Dockrell D.H."/>
            <person name="Milo M."/>
            <person name="Taylor C.T."/>
            <person name="Johnson R.S."/>
            <person name="Pugh C.W."/>
            <person name="Ratcliffe P.J."/>
            <person name="Maxwell P.H."/>
            <person name="Carmeliet P."/>
            <person name="Whyte M.K."/>
        </authorList>
    </citation>
    <scope>FUNCTION</scope>
    <scope>INDUCTION</scope>
</reference>
<reference key="23">
    <citation type="journal article" date="2011" name="J. Inorg. Biochem.">
        <title>Effects of polynitrogen compounds on the activity of recombinant human HIF-1alpha prolyl hydroxylase 3 in E. coli.</title>
        <authorList>
            <person name="Geng Z."/>
            <person name="Zhu J."/>
            <person name="Cao J."/>
            <person name="Geng J."/>
            <person name="Song X."/>
            <person name="Zhang Z."/>
            <person name="Bian N."/>
            <person name="Wang Z."/>
        </authorList>
    </citation>
    <scope>IDENTIFICATION BY MASS SPECTROMETRY</scope>
    <scope>ACTIVITY REGULATION</scope>
</reference>
<reference key="24">
    <citation type="journal article" date="2012" name="J. Clin. Invest.">
        <title>PHD3-dependent hydroxylation of HCLK2 promotes the DNA damage response.</title>
        <authorList>
            <person name="Xie L."/>
            <person name="Pi X."/>
            <person name="Mishra A."/>
            <person name="Fong G."/>
            <person name="Peng J."/>
            <person name="Patterson C."/>
        </authorList>
    </citation>
    <scope>FUNCTION</scope>
    <scope>CATALYTIC ACTIVITY</scope>
</reference>
<reference key="25">
    <citation type="journal article" date="2012" name="Nat. Cell Biol.">
        <title>The LIMD1 protein bridges an association between the prolyl hydroxylases and VHL to repress HIF-1 activity.</title>
        <authorList>
            <person name="Foxler D.E."/>
            <person name="Bridge K.S."/>
            <person name="James V."/>
            <person name="Webb T.M."/>
            <person name="Mee M."/>
            <person name="Wong S.C."/>
            <person name="Feng Y."/>
            <person name="Constantin-Teodosiu D."/>
            <person name="Petursdottir T.E."/>
            <person name="Bjornsson J."/>
            <person name="Ingvarsson S."/>
            <person name="Ratcliffe P.J."/>
            <person name="Longmore G.D."/>
            <person name="Sharp T.V."/>
        </authorList>
    </citation>
    <scope>INTERACTION WITH LIMD1; WTIP AND AJUBA</scope>
</reference>
<protein>
    <recommendedName>
        <fullName evidence="26">Prolyl hydroxylase EGLN3</fullName>
        <ecNumber evidence="7 19 21 23">1.14.11.-</ecNumber>
    </recommendedName>
    <alternativeName>
        <fullName>Egl nine homolog 3</fullName>
        <ecNumber evidence="7">1.14.11.29</ecNumber>
    </alternativeName>
    <alternativeName>
        <fullName>HPH-1</fullName>
    </alternativeName>
    <alternativeName>
        <fullName>Hypoxia-inducible factor prolyl hydroxylase 3</fullName>
        <shortName>HIF-PH3</shortName>
        <shortName>HIF-prolyl hydroxylase 3</shortName>
        <shortName>HPH-3</shortName>
    </alternativeName>
    <alternativeName>
        <fullName evidence="24">Prolyl hydroxylase domain-containing protein 3</fullName>
        <shortName evidence="24">PHD3</shortName>
    </alternativeName>
</protein>
<feature type="chain" id="PRO_0000206666" description="Prolyl hydroxylase EGLN3">
    <location>
        <begin position="1"/>
        <end position="239"/>
    </location>
</feature>
<feature type="domain" description="Fe2OG dioxygenase" evidence="5">
    <location>
        <begin position="116"/>
        <end position="214"/>
    </location>
</feature>
<feature type="region of interest" description="Beta(2)beta(3) 'finger-like' loop" evidence="4">
    <location>
        <begin position="62"/>
        <end position="73"/>
    </location>
</feature>
<feature type="region of interest" description="Required for interaction with ADRB2" evidence="14">
    <location>
        <begin position="88"/>
        <end position="104"/>
    </location>
</feature>
<feature type="binding site" evidence="5">
    <location>
        <position position="135"/>
    </location>
    <ligand>
        <name>Fe cation</name>
        <dbReference type="ChEBI" id="CHEBI:24875"/>
    </ligand>
</feature>
<feature type="binding site" evidence="5">
    <location>
        <position position="137"/>
    </location>
    <ligand>
        <name>Fe cation</name>
        <dbReference type="ChEBI" id="CHEBI:24875"/>
    </ligand>
</feature>
<feature type="binding site" evidence="5">
    <location>
        <position position="196"/>
    </location>
    <ligand>
        <name>Fe cation</name>
        <dbReference type="ChEBI" id="CHEBI:24875"/>
    </ligand>
</feature>
<feature type="binding site" evidence="5">
    <location>
        <position position="205"/>
    </location>
    <ligand>
        <name>2-oxoglutarate</name>
        <dbReference type="ChEBI" id="CHEBI:16810"/>
    </ligand>
</feature>
<feature type="sequence variant" id="VAR_050449" description="In dbSNP:rs17102002.">
    <original>V</original>
    <variation>L</variation>
    <location>
        <position position="136"/>
    </location>
</feature>
<feature type="sequence variant" id="VAR_050450" description="In dbSNP:rs17101995.">
    <original>S</original>
    <variation>T</variation>
    <location>
        <position position="234"/>
    </location>
</feature>
<feature type="mutagenesis site" description="Abolishes interaction with ADRB2 and no increase in cellular abundance of ADRB2." evidence="14">
    <original>ISFLLSLIDRLV</original>
    <variation>RSFLRSLIRRLR</variation>
    <location>
        <begin position="91"/>
        <end position="102"/>
    </location>
</feature>
<feature type="mutagenesis site" description="Eliminates hydroxylase activity." evidence="7">
    <original>H</original>
    <variation>A</variation>
    <location>
        <position position="135"/>
    </location>
</feature>
<feature type="mutagenesis site" description="Eliminates hydroxylase activity." evidence="7">
    <original>D</original>
    <variation>A</variation>
    <location>
        <position position="137"/>
    </location>
</feature>
<feature type="mutagenesis site" description="Eliminates hydroxylase activity." evidence="7">
    <original>H</original>
    <variation>A</variation>
    <location>
        <position position="196"/>
    </location>
</feature>
<organism>
    <name type="scientific">Homo sapiens</name>
    <name type="common">Human</name>
    <dbReference type="NCBI Taxonomy" id="9606"/>
    <lineage>
        <taxon>Eukaryota</taxon>
        <taxon>Metazoa</taxon>
        <taxon>Chordata</taxon>
        <taxon>Craniata</taxon>
        <taxon>Vertebrata</taxon>
        <taxon>Euteleostomi</taxon>
        <taxon>Mammalia</taxon>
        <taxon>Eutheria</taxon>
        <taxon>Euarchontoglires</taxon>
        <taxon>Primates</taxon>
        <taxon>Haplorrhini</taxon>
        <taxon>Catarrhini</taxon>
        <taxon>Hominidae</taxon>
        <taxon>Homo</taxon>
    </lineage>
</organism>